<proteinExistence type="inferred from homology"/>
<evidence type="ECO:0000255" key="1">
    <source>
        <dbReference type="HAMAP-Rule" id="MF_00109"/>
    </source>
</evidence>
<comment type="function">
    <text evidence="1">Catalyzes the specific phosphorylation of the 3-hydroxyl group of shikimic acid using ATP as a cosubstrate.</text>
</comment>
<comment type="catalytic activity">
    <reaction evidence="1">
        <text>shikimate + ATP = 3-phosphoshikimate + ADP + H(+)</text>
        <dbReference type="Rhea" id="RHEA:13121"/>
        <dbReference type="ChEBI" id="CHEBI:15378"/>
        <dbReference type="ChEBI" id="CHEBI:30616"/>
        <dbReference type="ChEBI" id="CHEBI:36208"/>
        <dbReference type="ChEBI" id="CHEBI:145989"/>
        <dbReference type="ChEBI" id="CHEBI:456216"/>
        <dbReference type="EC" id="2.7.1.71"/>
    </reaction>
</comment>
<comment type="cofactor">
    <cofactor evidence="1">
        <name>Mg(2+)</name>
        <dbReference type="ChEBI" id="CHEBI:18420"/>
    </cofactor>
    <text evidence="1">Binds 1 Mg(2+) ion per subunit.</text>
</comment>
<comment type="pathway">
    <text evidence="1">Metabolic intermediate biosynthesis; chorismate biosynthesis; chorismate from D-erythrose 4-phosphate and phosphoenolpyruvate: step 5/7.</text>
</comment>
<comment type="subunit">
    <text evidence="1">Monomer.</text>
</comment>
<comment type="subcellular location">
    <subcellularLocation>
        <location evidence="1">Cytoplasm</location>
    </subcellularLocation>
</comment>
<comment type="similarity">
    <text evidence="1">Belongs to the shikimate kinase family.</text>
</comment>
<accession>Q2L1Z2</accession>
<name>AROK_BORA1</name>
<reference key="1">
    <citation type="journal article" date="2006" name="J. Bacteriol.">
        <title>Comparison of the genome sequence of the poultry pathogen Bordetella avium with those of B. bronchiseptica, B. pertussis, and B. parapertussis reveals extensive diversity in surface structures associated with host interaction.</title>
        <authorList>
            <person name="Sebaihia M."/>
            <person name="Preston A."/>
            <person name="Maskell D.J."/>
            <person name="Kuzmiak H."/>
            <person name="Connell T.D."/>
            <person name="King N.D."/>
            <person name="Orndorff P.E."/>
            <person name="Miyamoto D.M."/>
            <person name="Thomson N.R."/>
            <person name="Harris D."/>
            <person name="Goble A."/>
            <person name="Lord A."/>
            <person name="Murphy L."/>
            <person name="Quail M.A."/>
            <person name="Rutter S."/>
            <person name="Squares R."/>
            <person name="Squares S."/>
            <person name="Woodward J."/>
            <person name="Parkhill J."/>
            <person name="Temple L.M."/>
        </authorList>
    </citation>
    <scope>NUCLEOTIDE SEQUENCE [LARGE SCALE GENOMIC DNA]</scope>
    <source>
        <strain>197N</strain>
    </source>
</reference>
<keyword id="KW-0028">Amino-acid biosynthesis</keyword>
<keyword id="KW-0057">Aromatic amino acid biosynthesis</keyword>
<keyword id="KW-0067">ATP-binding</keyword>
<keyword id="KW-0963">Cytoplasm</keyword>
<keyword id="KW-0418">Kinase</keyword>
<keyword id="KW-0460">Magnesium</keyword>
<keyword id="KW-0479">Metal-binding</keyword>
<keyword id="KW-0547">Nucleotide-binding</keyword>
<keyword id="KW-1185">Reference proteome</keyword>
<keyword id="KW-0808">Transferase</keyword>
<dbReference type="EC" id="2.7.1.71" evidence="1"/>
<dbReference type="EMBL" id="AM167904">
    <property type="protein sequence ID" value="CAJ47661.1"/>
    <property type="molecule type" value="Genomic_DNA"/>
</dbReference>
<dbReference type="RefSeq" id="WP_012415776.1">
    <property type="nucleotide sequence ID" value="NC_010645.1"/>
</dbReference>
<dbReference type="SMR" id="Q2L1Z2"/>
<dbReference type="STRING" id="360910.BAV0073"/>
<dbReference type="GeneID" id="92936681"/>
<dbReference type="KEGG" id="bav:BAV0073"/>
<dbReference type="eggNOG" id="COG0703">
    <property type="taxonomic scope" value="Bacteria"/>
</dbReference>
<dbReference type="HOGENOM" id="CLU_057607_2_2_4"/>
<dbReference type="OrthoDB" id="9800332at2"/>
<dbReference type="UniPathway" id="UPA00053">
    <property type="reaction ID" value="UER00088"/>
</dbReference>
<dbReference type="Proteomes" id="UP000001977">
    <property type="component" value="Chromosome"/>
</dbReference>
<dbReference type="GO" id="GO:0005829">
    <property type="term" value="C:cytosol"/>
    <property type="evidence" value="ECO:0007669"/>
    <property type="project" value="TreeGrafter"/>
</dbReference>
<dbReference type="GO" id="GO:0005524">
    <property type="term" value="F:ATP binding"/>
    <property type="evidence" value="ECO:0007669"/>
    <property type="project" value="UniProtKB-UniRule"/>
</dbReference>
<dbReference type="GO" id="GO:0000287">
    <property type="term" value="F:magnesium ion binding"/>
    <property type="evidence" value="ECO:0007669"/>
    <property type="project" value="UniProtKB-UniRule"/>
</dbReference>
<dbReference type="GO" id="GO:0004765">
    <property type="term" value="F:shikimate kinase activity"/>
    <property type="evidence" value="ECO:0007669"/>
    <property type="project" value="UniProtKB-UniRule"/>
</dbReference>
<dbReference type="GO" id="GO:0008652">
    <property type="term" value="P:amino acid biosynthetic process"/>
    <property type="evidence" value="ECO:0007669"/>
    <property type="project" value="UniProtKB-KW"/>
</dbReference>
<dbReference type="GO" id="GO:0009073">
    <property type="term" value="P:aromatic amino acid family biosynthetic process"/>
    <property type="evidence" value="ECO:0007669"/>
    <property type="project" value="UniProtKB-KW"/>
</dbReference>
<dbReference type="GO" id="GO:0009423">
    <property type="term" value="P:chorismate biosynthetic process"/>
    <property type="evidence" value="ECO:0007669"/>
    <property type="project" value="UniProtKB-UniRule"/>
</dbReference>
<dbReference type="CDD" id="cd00464">
    <property type="entry name" value="SK"/>
    <property type="match status" value="1"/>
</dbReference>
<dbReference type="Gene3D" id="3.40.50.300">
    <property type="entry name" value="P-loop containing nucleotide triphosphate hydrolases"/>
    <property type="match status" value="1"/>
</dbReference>
<dbReference type="HAMAP" id="MF_00109">
    <property type="entry name" value="Shikimate_kinase"/>
    <property type="match status" value="1"/>
</dbReference>
<dbReference type="InterPro" id="IPR027417">
    <property type="entry name" value="P-loop_NTPase"/>
</dbReference>
<dbReference type="InterPro" id="IPR031322">
    <property type="entry name" value="Shikimate/glucono_kinase"/>
</dbReference>
<dbReference type="InterPro" id="IPR000623">
    <property type="entry name" value="Shikimate_kinase/TSH1"/>
</dbReference>
<dbReference type="InterPro" id="IPR023000">
    <property type="entry name" value="Shikimate_kinase_CS"/>
</dbReference>
<dbReference type="PANTHER" id="PTHR21087">
    <property type="entry name" value="SHIKIMATE KINASE"/>
    <property type="match status" value="1"/>
</dbReference>
<dbReference type="PANTHER" id="PTHR21087:SF16">
    <property type="entry name" value="SHIKIMATE KINASE 1, CHLOROPLASTIC"/>
    <property type="match status" value="1"/>
</dbReference>
<dbReference type="Pfam" id="PF01202">
    <property type="entry name" value="SKI"/>
    <property type="match status" value="1"/>
</dbReference>
<dbReference type="PRINTS" id="PR01100">
    <property type="entry name" value="SHIKIMTKNASE"/>
</dbReference>
<dbReference type="SUPFAM" id="SSF52540">
    <property type="entry name" value="P-loop containing nucleoside triphosphate hydrolases"/>
    <property type="match status" value="1"/>
</dbReference>
<dbReference type="PROSITE" id="PS01128">
    <property type="entry name" value="SHIKIMATE_KINASE"/>
    <property type="match status" value="1"/>
</dbReference>
<sequence length="209" mass="23032">MTLSVNLCSGAEALPTEQEAASLAVECIEPLAQLPHDLPIFLVGMMGAGKTTIGRGLARALGREFIDLDHELEARCGVRVPVIFEIEGEAGFRKRESTALQECTQRRGIILATGGGAVLAEENRRLLRERGIVLYLRASVDELFRRTSRDRNRPLLATADPRGTLNDLMIKREPLYKEVADLVIETGAMPITTLIKAILPKLQAYEKKL</sequence>
<gene>
    <name evidence="1" type="primary">aroK</name>
    <name type="ordered locus">BAV0073</name>
</gene>
<organism>
    <name type="scientific">Bordetella avium (strain 197N)</name>
    <dbReference type="NCBI Taxonomy" id="360910"/>
    <lineage>
        <taxon>Bacteria</taxon>
        <taxon>Pseudomonadati</taxon>
        <taxon>Pseudomonadota</taxon>
        <taxon>Betaproteobacteria</taxon>
        <taxon>Burkholderiales</taxon>
        <taxon>Alcaligenaceae</taxon>
        <taxon>Bordetella</taxon>
    </lineage>
</organism>
<protein>
    <recommendedName>
        <fullName evidence="1">Shikimate kinase</fullName>
        <shortName evidence="1">SK</shortName>
        <ecNumber evidence="1">2.7.1.71</ecNumber>
    </recommendedName>
</protein>
<feature type="chain" id="PRO_0000237849" description="Shikimate kinase">
    <location>
        <begin position="1"/>
        <end position="209"/>
    </location>
</feature>
<feature type="binding site" evidence="1">
    <location>
        <begin position="47"/>
        <end position="52"/>
    </location>
    <ligand>
        <name>ATP</name>
        <dbReference type="ChEBI" id="CHEBI:30616"/>
    </ligand>
</feature>
<feature type="binding site" evidence="1">
    <location>
        <position position="51"/>
    </location>
    <ligand>
        <name>Mg(2+)</name>
        <dbReference type="ChEBI" id="CHEBI:18420"/>
    </ligand>
</feature>
<feature type="binding site" evidence="1">
    <location>
        <position position="69"/>
    </location>
    <ligand>
        <name>substrate</name>
    </ligand>
</feature>
<feature type="binding site" evidence="1">
    <location>
        <position position="93"/>
    </location>
    <ligand>
        <name>substrate</name>
    </ligand>
</feature>
<feature type="binding site" evidence="1">
    <location>
        <position position="115"/>
    </location>
    <ligand>
        <name>substrate</name>
    </ligand>
</feature>
<feature type="binding site" evidence="1">
    <location>
        <position position="153"/>
    </location>
    <ligand>
        <name>ATP</name>
        <dbReference type="ChEBI" id="CHEBI:30616"/>
    </ligand>
</feature>
<feature type="binding site" evidence="1">
    <location>
        <position position="172"/>
    </location>
    <ligand>
        <name>substrate</name>
    </ligand>
</feature>